<reference key="1">
    <citation type="submission" date="2002-12" db="EMBL/GenBank/DDBJ databases">
        <title>Complete genome sequence of Vibrio vulnificus CMCP6.</title>
        <authorList>
            <person name="Rhee J.H."/>
            <person name="Kim S.Y."/>
            <person name="Chung S.S."/>
            <person name="Kim J.J."/>
            <person name="Moon Y.H."/>
            <person name="Jeong H."/>
            <person name="Choy H.E."/>
        </authorList>
    </citation>
    <scope>NUCLEOTIDE SEQUENCE [LARGE SCALE GENOMIC DNA]</scope>
    <source>
        <strain>CMCP6</strain>
    </source>
</reference>
<accession>Q8DCZ0</accession>
<name>DSBD_VIBVU</name>
<feature type="signal peptide" evidence="1">
    <location>
        <begin position="1"/>
        <end position="21"/>
    </location>
</feature>
<feature type="chain" id="PRO_0000007389" description="Thiol:disulfide interchange protein DsbD">
    <location>
        <begin position="22"/>
        <end position="593"/>
    </location>
</feature>
<feature type="transmembrane region" description="Helical" evidence="1">
    <location>
        <begin position="193"/>
        <end position="215"/>
    </location>
</feature>
<feature type="transmembrane region" description="Helical" evidence="1">
    <location>
        <begin position="235"/>
        <end position="257"/>
    </location>
</feature>
<feature type="transmembrane region" description="Helical" evidence="1">
    <location>
        <begin position="269"/>
        <end position="291"/>
    </location>
</feature>
<feature type="transmembrane region" description="Helical" evidence="1">
    <location>
        <begin position="318"/>
        <end position="340"/>
    </location>
</feature>
<feature type="transmembrane region" description="Helical" evidence="1">
    <location>
        <begin position="347"/>
        <end position="369"/>
    </location>
</feature>
<feature type="transmembrane region" description="Helical" evidence="1">
    <location>
        <begin position="384"/>
        <end position="401"/>
    </location>
</feature>
<feature type="transmembrane region" description="Helical" evidence="1">
    <location>
        <begin position="408"/>
        <end position="425"/>
    </location>
</feature>
<feature type="transmembrane region" description="Helical" evidence="1">
    <location>
        <begin position="440"/>
        <end position="462"/>
    </location>
</feature>
<feature type="domain" description="Thioredoxin" evidence="1">
    <location>
        <begin position="451"/>
        <end position="593"/>
    </location>
</feature>
<feature type="disulfide bond" description="Redox-active" evidence="1">
    <location>
        <begin position="130"/>
        <end position="136"/>
    </location>
</feature>
<feature type="disulfide bond" description="Redox-active" evidence="1">
    <location>
        <begin position="207"/>
        <end position="328"/>
    </location>
</feature>
<feature type="disulfide bond" description="Redox-active" evidence="1">
    <location>
        <begin position="508"/>
        <end position="511"/>
    </location>
</feature>
<proteinExistence type="inferred from homology"/>
<dbReference type="EC" id="1.8.1.8" evidence="1"/>
<dbReference type="EMBL" id="AE016795">
    <property type="protein sequence ID" value="AAO09703.1"/>
    <property type="molecule type" value="Genomic_DNA"/>
</dbReference>
<dbReference type="RefSeq" id="WP_011079232.1">
    <property type="nucleotide sequence ID" value="NC_004459.3"/>
</dbReference>
<dbReference type="SMR" id="Q8DCZ0"/>
<dbReference type="KEGG" id="vvu:VV1_1247"/>
<dbReference type="HOGENOM" id="CLU_014657_3_0_6"/>
<dbReference type="Proteomes" id="UP000002275">
    <property type="component" value="Chromosome 1"/>
</dbReference>
<dbReference type="GO" id="GO:0005886">
    <property type="term" value="C:plasma membrane"/>
    <property type="evidence" value="ECO:0007669"/>
    <property type="project" value="UniProtKB-SubCell"/>
</dbReference>
<dbReference type="GO" id="GO:0009055">
    <property type="term" value="F:electron transfer activity"/>
    <property type="evidence" value="ECO:0007669"/>
    <property type="project" value="UniProtKB-UniRule"/>
</dbReference>
<dbReference type="GO" id="GO:0047134">
    <property type="term" value="F:protein-disulfide reductase [NAD(P)H] activity"/>
    <property type="evidence" value="ECO:0007669"/>
    <property type="project" value="UniProtKB-UniRule"/>
</dbReference>
<dbReference type="GO" id="GO:0045454">
    <property type="term" value="P:cell redox homeostasis"/>
    <property type="evidence" value="ECO:0007669"/>
    <property type="project" value="TreeGrafter"/>
</dbReference>
<dbReference type="GO" id="GO:0017004">
    <property type="term" value="P:cytochrome complex assembly"/>
    <property type="evidence" value="ECO:0007669"/>
    <property type="project" value="UniProtKB-UniRule"/>
</dbReference>
<dbReference type="CDD" id="cd02953">
    <property type="entry name" value="DsbDgamma"/>
    <property type="match status" value="1"/>
</dbReference>
<dbReference type="FunFam" id="3.40.30.10:FF:000116">
    <property type="entry name" value="Thiol:disulfide interchange protein DsbD"/>
    <property type="match status" value="1"/>
</dbReference>
<dbReference type="Gene3D" id="3.40.30.10">
    <property type="entry name" value="Glutaredoxin"/>
    <property type="match status" value="1"/>
</dbReference>
<dbReference type="Gene3D" id="2.60.40.1250">
    <property type="entry name" value="Thiol:disulfide interchange protein DsbD, N-terminal domain"/>
    <property type="match status" value="1"/>
</dbReference>
<dbReference type="HAMAP" id="MF_00399">
    <property type="entry name" value="DbsD"/>
    <property type="match status" value="1"/>
</dbReference>
<dbReference type="InterPro" id="IPR003834">
    <property type="entry name" value="Cyt_c_assmbl_TM_dom"/>
</dbReference>
<dbReference type="InterPro" id="IPR035671">
    <property type="entry name" value="DsbD_gamma"/>
</dbReference>
<dbReference type="InterPro" id="IPR028250">
    <property type="entry name" value="DsbDN"/>
</dbReference>
<dbReference type="InterPro" id="IPR036929">
    <property type="entry name" value="DsbDN_sf"/>
</dbReference>
<dbReference type="InterPro" id="IPR022910">
    <property type="entry name" value="Thiol_diS_interchange_DbsD"/>
</dbReference>
<dbReference type="InterPro" id="IPR036249">
    <property type="entry name" value="Thioredoxin-like_sf"/>
</dbReference>
<dbReference type="InterPro" id="IPR017937">
    <property type="entry name" value="Thioredoxin_CS"/>
</dbReference>
<dbReference type="InterPro" id="IPR013766">
    <property type="entry name" value="Thioredoxin_domain"/>
</dbReference>
<dbReference type="NCBIfam" id="NF001419">
    <property type="entry name" value="PRK00293.1"/>
    <property type="match status" value="1"/>
</dbReference>
<dbReference type="PANTHER" id="PTHR32234">
    <property type="entry name" value="THIOL:DISULFIDE INTERCHANGE PROTEIN DSBD"/>
    <property type="match status" value="1"/>
</dbReference>
<dbReference type="PANTHER" id="PTHR32234:SF0">
    <property type="entry name" value="THIOL:DISULFIDE INTERCHANGE PROTEIN DSBD"/>
    <property type="match status" value="1"/>
</dbReference>
<dbReference type="Pfam" id="PF11412">
    <property type="entry name" value="DsbD_N"/>
    <property type="match status" value="1"/>
</dbReference>
<dbReference type="Pfam" id="PF02683">
    <property type="entry name" value="DsbD_TM"/>
    <property type="match status" value="1"/>
</dbReference>
<dbReference type="Pfam" id="PF13899">
    <property type="entry name" value="Thioredoxin_7"/>
    <property type="match status" value="1"/>
</dbReference>
<dbReference type="SUPFAM" id="SSF74863">
    <property type="entry name" value="Thiol:disulfide interchange protein DsbD, N-terminal domain (DsbD-alpha)"/>
    <property type="match status" value="1"/>
</dbReference>
<dbReference type="SUPFAM" id="SSF52833">
    <property type="entry name" value="Thioredoxin-like"/>
    <property type="match status" value="1"/>
</dbReference>
<dbReference type="PROSITE" id="PS00194">
    <property type="entry name" value="THIOREDOXIN_1"/>
    <property type="match status" value="1"/>
</dbReference>
<dbReference type="PROSITE" id="PS51352">
    <property type="entry name" value="THIOREDOXIN_2"/>
    <property type="match status" value="1"/>
</dbReference>
<evidence type="ECO:0000255" key="1">
    <source>
        <dbReference type="HAMAP-Rule" id="MF_00399"/>
    </source>
</evidence>
<comment type="function">
    <text evidence="1">Required to facilitate the formation of correct disulfide bonds in some periplasmic proteins and for the assembly of the periplasmic c-type cytochromes. Acts by transferring electrons from cytoplasmic thioredoxin to the periplasm. This transfer involves a cascade of disulfide bond formation and reduction steps.</text>
</comment>
<comment type="catalytic activity">
    <reaction evidence="1">
        <text>[protein]-dithiol + NAD(+) = [protein]-disulfide + NADH + H(+)</text>
        <dbReference type="Rhea" id="RHEA:18749"/>
        <dbReference type="Rhea" id="RHEA-COMP:10593"/>
        <dbReference type="Rhea" id="RHEA-COMP:10594"/>
        <dbReference type="ChEBI" id="CHEBI:15378"/>
        <dbReference type="ChEBI" id="CHEBI:29950"/>
        <dbReference type="ChEBI" id="CHEBI:50058"/>
        <dbReference type="ChEBI" id="CHEBI:57540"/>
        <dbReference type="ChEBI" id="CHEBI:57945"/>
        <dbReference type="EC" id="1.8.1.8"/>
    </reaction>
</comment>
<comment type="catalytic activity">
    <reaction evidence="1">
        <text>[protein]-dithiol + NADP(+) = [protein]-disulfide + NADPH + H(+)</text>
        <dbReference type="Rhea" id="RHEA:18753"/>
        <dbReference type="Rhea" id="RHEA-COMP:10593"/>
        <dbReference type="Rhea" id="RHEA-COMP:10594"/>
        <dbReference type="ChEBI" id="CHEBI:15378"/>
        <dbReference type="ChEBI" id="CHEBI:29950"/>
        <dbReference type="ChEBI" id="CHEBI:50058"/>
        <dbReference type="ChEBI" id="CHEBI:57783"/>
        <dbReference type="ChEBI" id="CHEBI:58349"/>
        <dbReference type="EC" id="1.8.1.8"/>
    </reaction>
</comment>
<comment type="subcellular location">
    <subcellularLocation>
        <location evidence="1">Cell inner membrane</location>
        <topology evidence="1">Multi-pass membrane protein</topology>
    </subcellularLocation>
</comment>
<comment type="similarity">
    <text evidence="1">Belongs to the thioredoxin family. DsbD subfamily.</text>
</comment>
<organism>
    <name type="scientific">Vibrio vulnificus (strain CMCP6)</name>
    <dbReference type="NCBI Taxonomy" id="216895"/>
    <lineage>
        <taxon>Bacteria</taxon>
        <taxon>Pseudomonadati</taxon>
        <taxon>Pseudomonadota</taxon>
        <taxon>Gammaproteobacteria</taxon>
        <taxon>Vibrionales</taxon>
        <taxon>Vibrionaceae</taxon>
        <taxon>Vibrio</taxon>
    </lineage>
</organism>
<sequence>MRALLTFFVAGLLVLSSPAMALFGNNQNSSFASGSNDFVPVDQAFPFNYFQQDHRITLDWQVKEGYYLYQQRLSFSAENVVLGDIQMENGQPYRDEFFGDVNIYTNPLFVNIPMQDWQPGAKLIVQYQGCAKAGFCYPPETRVIDITSFTNGDMAPATMPTQTANPLDTSTPQPLTQQDQLASGLADNWWTPLLFLALGVGLAFTPCVLPMYPILTSIVLGSGKLSQRRALGLSLVYVQGMALTYTLLGLVVASAGLQFQAAMQHPYVLIGLSILFVTLALSMFGVYTLQLPSSVQTWLNNLSNKQQGGSSAGVFAMGAISGLVCSPCTTAPLSGALLYVAQSGDLLTGGVALYALAMGMGIPLILVAVFGNKLLPKAGGWMDRVKTLFGFVLLAAPIFLLERILPEMWSTALWSALGIAAFGWLYHVKNSLEFGGWKQSAVGIIAVLGLFASAQPALNYWFTDSSQQTQTSEVSFIKIRNVEELQQQLALAKQAKKPVMLDFYADWCVACKEFEKYTFHDPAVAAQLKQFVLLQADVTRNQAQDIELLQAQQVLGLPTIDFWDAQGNPVSNARLTGFMQAAPFLEHIQRISN</sequence>
<keyword id="KW-0997">Cell inner membrane</keyword>
<keyword id="KW-1003">Cell membrane</keyword>
<keyword id="KW-0201">Cytochrome c-type biogenesis</keyword>
<keyword id="KW-1015">Disulfide bond</keyword>
<keyword id="KW-0249">Electron transport</keyword>
<keyword id="KW-0472">Membrane</keyword>
<keyword id="KW-0520">NAD</keyword>
<keyword id="KW-0560">Oxidoreductase</keyword>
<keyword id="KW-0676">Redox-active center</keyword>
<keyword id="KW-0732">Signal</keyword>
<keyword id="KW-0812">Transmembrane</keyword>
<keyword id="KW-1133">Transmembrane helix</keyword>
<keyword id="KW-0813">Transport</keyword>
<gene>
    <name evidence="1" type="primary">dsbD</name>
    <name type="ordered locus">VV1_1247</name>
</gene>
<protein>
    <recommendedName>
        <fullName evidence="1">Thiol:disulfide interchange protein DsbD</fullName>
        <ecNumber evidence="1">1.8.1.8</ecNumber>
    </recommendedName>
    <alternativeName>
        <fullName evidence="1">Protein-disulfide reductase</fullName>
        <shortName evidence="1">Disulfide reductase</shortName>
    </alternativeName>
</protein>